<keyword id="KW-0963">Cytoplasm</keyword>
<keyword id="KW-0210">Decarboxylase</keyword>
<keyword id="KW-0456">Lyase</keyword>
<keyword id="KW-0627">Porphyrin biosynthesis</keyword>
<keyword id="KW-1185">Reference proteome</keyword>
<protein>
    <recommendedName>
        <fullName evidence="1">Uroporphyrinogen decarboxylase</fullName>
        <shortName evidence="1">UPD</shortName>
        <shortName evidence="1">URO-D</shortName>
        <ecNumber evidence="1">4.1.1.37</ecNumber>
    </recommendedName>
</protein>
<dbReference type="EC" id="4.1.1.37" evidence="1"/>
<dbReference type="EMBL" id="CP000698">
    <property type="protein sequence ID" value="ABQ24233.1"/>
    <property type="molecule type" value="Genomic_DNA"/>
</dbReference>
<dbReference type="RefSeq" id="WP_011936962.1">
    <property type="nucleotide sequence ID" value="NC_009483.1"/>
</dbReference>
<dbReference type="SMR" id="A5GDW7"/>
<dbReference type="STRING" id="351605.Gura_0015"/>
<dbReference type="KEGG" id="gur:Gura_0015"/>
<dbReference type="HOGENOM" id="CLU_040933_0_0_7"/>
<dbReference type="OrthoDB" id="9806656at2"/>
<dbReference type="UniPathway" id="UPA00251">
    <property type="reaction ID" value="UER00321"/>
</dbReference>
<dbReference type="Proteomes" id="UP000006695">
    <property type="component" value="Chromosome"/>
</dbReference>
<dbReference type="GO" id="GO:0005737">
    <property type="term" value="C:cytoplasm"/>
    <property type="evidence" value="ECO:0007669"/>
    <property type="project" value="UniProtKB-SubCell"/>
</dbReference>
<dbReference type="GO" id="GO:0004853">
    <property type="term" value="F:uroporphyrinogen decarboxylase activity"/>
    <property type="evidence" value="ECO:0007669"/>
    <property type="project" value="UniProtKB-UniRule"/>
</dbReference>
<dbReference type="GO" id="GO:0006782">
    <property type="term" value="P:protoporphyrinogen IX biosynthetic process"/>
    <property type="evidence" value="ECO:0007669"/>
    <property type="project" value="UniProtKB-UniRule"/>
</dbReference>
<dbReference type="CDD" id="cd00717">
    <property type="entry name" value="URO-D"/>
    <property type="match status" value="1"/>
</dbReference>
<dbReference type="FunFam" id="3.20.20.210:FF:000007">
    <property type="entry name" value="Uroporphyrinogen decarboxylase"/>
    <property type="match status" value="1"/>
</dbReference>
<dbReference type="Gene3D" id="3.20.20.210">
    <property type="match status" value="1"/>
</dbReference>
<dbReference type="HAMAP" id="MF_00218">
    <property type="entry name" value="URO_D"/>
    <property type="match status" value="1"/>
</dbReference>
<dbReference type="InterPro" id="IPR038071">
    <property type="entry name" value="UROD/MetE-like_sf"/>
</dbReference>
<dbReference type="InterPro" id="IPR006361">
    <property type="entry name" value="Uroporphyrinogen_deCO2ase_HemE"/>
</dbReference>
<dbReference type="InterPro" id="IPR000257">
    <property type="entry name" value="Uroporphyrinogen_deCOase"/>
</dbReference>
<dbReference type="NCBIfam" id="TIGR01464">
    <property type="entry name" value="hemE"/>
    <property type="match status" value="1"/>
</dbReference>
<dbReference type="Pfam" id="PF01208">
    <property type="entry name" value="URO-D"/>
    <property type="match status" value="1"/>
</dbReference>
<dbReference type="SUPFAM" id="SSF51726">
    <property type="entry name" value="UROD/MetE-like"/>
    <property type="match status" value="1"/>
</dbReference>
<dbReference type="PROSITE" id="PS00906">
    <property type="entry name" value="UROD_1"/>
    <property type="match status" value="1"/>
</dbReference>
<dbReference type="PROSITE" id="PS00907">
    <property type="entry name" value="UROD_2"/>
    <property type="match status" value="1"/>
</dbReference>
<sequence>MNTRFLDACWGKPVDRTPVWLMRQAGRYLPDYMRVRSKCTFLELCKTPELAAEVSIQPVDILGVDAAILFSDILTPVEPMGMALDFVPGPVFEHPIRTMADVEKLRIPQMEQDVPYVLETIKILRRELANKVPLIGFGGAPFTLACYMVEGKGSKDWATMKRMMYAAPEVYAALMEKVTMMDMEYLNAQIKAGAQAIQIFDTWGGVLAPSDYEKYVLPYTTKLINGLNRQNVPVIHFVKGAGTMLDSVKRAGGDVMGLDWHINLGKAREVLGDMAVQGNLDPTVLFAPKDVIEQEVKRVLDENAGKPGHIFNLGHGILPTVPPENAIHMVECVHRLSQK</sequence>
<reference key="1">
    <citation type="submission" date="2007-05" db="EMBL/GenBank/DDBJ databases">
        <title>Complete sequence of Geobacter uraniireducens Rf4.</title>
        <authorList>
            <consortium name="US DOE Joint Genome Institute"/>
            <person name="Copeland A."/>
            <person name="Lucas S."/>
            <person name="Lapidus A."/>
            <person name="Barry K."/>
            <person name="Detter J.C."/>
            <person name="Glavina del Rio T."/>
            <person name="Hammon N."/>
            <person name="Israni S."/>
            <person name="Dalin E."/>
            <person name="Tice H."/>
            <person name="Pitluck S."/>
            <person name="Chertkov O."/>
            <person name="Brettin T."/>
            <person name="Bruce D."/>
            <person name="Han C."/>
            <person name="Schmutz J."/>
            <person name="Larimer F."/>
            <person name="Land M."/>
            <person name="Hauser L."/>
            <person name="Kyrpides N."/>
            <person name="Mikhailova N."/>
            <person name="Shelobolina E."/>
            <person name="Aklujkar M."/>
            <person name="Lovley D."/>
            <person name="Richardson P."/>
        </authorList>
    </citation>
    <scope>NUCLEOTIDE SEQUENCE [LARGE SCALE GENOMIC DNA]</scope>
    <source>
        <strain>ATCC BAA-1134 / JCM 13001 / Rf4</strain>
    </source>
</reference>
<organism>
    <name type="scientific">Geotalea uraniireducens (strain Rf4)</name>
    <name type="common">Geobacter uraniireducens</name>
    <dbReference type="NCBI Taxonomy" id="351605"/>
    <lineage>
        <taxon>Bacteria</taxon>
        <taxon>Pseudomonadati</taxon>
        <taxon>Thermodesulfobacteriota</taxon>
        <taxon>Desulfuromonadia</taxon>
        <taxon>Geobacterales</taxon>
        <taxon>Geobacteraceae</taxon>
        <taxon>Geotalea</taxon>
    </lineage>
</organism>
<gene>
    <name evidence="1" type="primary">hemE</name>
    <name type="ordered locus">Gura_0015</name>
</gene>
<name>DCUP_GEOUR</name>
<evidence type="ECO:0000255" key="1">
    <source>
        <dbReference type="HAMAP-Rule" id="MF_00218"/>
    </source>
</evidence>
<feature type="chain" id="PRO_1000078075" description="Uroporphyrinogen decarboxylase">
    <location>
        <begin position="1"/>
        <end position="339"/>
    </location>
</feature>
<feature type="binding site" evidence="1">
    <location>
        <begin position="23"/>
        <end position="27"/>
    </location>
    <ligand>
        <name>substrate</name>
    </ligand>
</feature>
<feature type="binding site" evidence="1">
    <location>
        <position position="72"/>
    </location>
    <ligand>
        <name>substrate</name>
    </ligand>
</feature>
<feature type="binding site" evidence="1">
    <location>
        <position position="147"/>
    </location>
    <ligand>
        <name>substrate</name>
    </ligand>
</feature>
<feature type="binding site" evidence="1">
    <location>
        <position position="202"/>
    </location>
    <ligand>
        <name>substrate</name>
    </ligand>
</feature>
<feature type="binding site" evidence="1">
    <location>
        <position position="315"/>
    </location>
    <ligand>
        <name>substrate</name>
    </ligand>
</feature>
<feature type="site" description="Transition state stabilizer" evidence="1">
    <location>
        <position position="72"/>
    </location>
</feature>
<proteinExistence type="inferred from homology"/>
<accession>A5GDW7</accession>
<comment type="function">
    <text evidence="1">Catalyzes the decarboxylation of four acetate groups of uroporphyrinogen-III to yield coproporphyrinogen-III.</text>
</comment>
<comment type="catalytic activity">
    <reaction evidence="1">
        <text>uroporphyrinogen III + 4 H(+) = coproporphyrinogen III + 4 CO2</text>
        <dbReference type="Rhea" id="RHEA:19865"/>
        <dbReference type="ChEBI" id="CHEBI:15378"/>
        <dbReference type="ChEBI" id="CHEBI:16526"/>
        <dbReference type="ChEBI" id="CHEBI:57308"/>
        <dbReference type="ChEBI" id="CHEBI:57309"/>
        <dbReference type="EC" id="4.1.1.37"/>
    </reaction>
</comment>
<comment type="pathway">
    <text evidence="1">Porphyrin-containing compound metabolism; protoporphyrin-IX biosynthesis; coproporphyrinogen-III from 5-aminolevulinate: step 4/4.</text>
</comment>
<comment type="subunit">
    <text evidence="1">Homodimer.</text>
</comment>
<comment type="subcellular location">
    <subcellularLocation>
        <location evidence="1">Cytoplasm</location>
    </subcellularLocation>
</comment>
<comment type="similarity">
    <text evidence="1">Belongs to the uroporphyrinogen decarboxylase family.</text>
</comment>